<feature type="chain" id="PRO_0000297901" description="Solute carrier family 35 member E3">
    <location>
        <begin position="1"/>
        <end position="313"/>
    </location>
</feature>
<feature type="transmembrane region" description="Helical" evidence="2">
    <location>
        <begin position="14"/>
        <end position="34"/>
    </location>
</feature>
<feature type="transmembrane region" description="Helical" evidence="2">
    <location>
        <begin position="40"/>
        <end position="60"/>
    </location>
</feature>
<feature type="transmembrane region" description="Helical" evidence="2">
    <location>
        <begin position="77"/>
        <end position="97"/>
    </location>
</feature>
<feature type="transmembrane region" description="Helical" evidence="2">
    <location>
        <begin position="100"/>
        <end position="122"/>
    </location>
</feature>
<feature type="transmembrane region" description="Helical" evidence="2">
    <location>
        <begin position="130"/>
        <end position="146"/>
    </location>
</feature>
<feature type="transmembrane region" description="Helical" evidence="2">
    <location>
        <begin position="153"/>
        <end position="173"/>
    </location>
</feature>
<feature type="transmembrane region" description="Helical" evidence="2">
    <location>
        <begin position="187"/>
        <end position="207"/>
    </location>
</feature>
<feature type="transmembrane region" description="Helical" evidence="2">
    <location>
        <begin position="215"/>
        <end position="235"/>
    </location>
</feature>
<feature type="transmembrane region" description="Helical" evidence="2">
    <location>
        <begin position="252"/>
        <end position="272"/>
    </location>
</feature>
<feature type="transmembrane region" description="Helical" evidence="2">
    <location>
        <begin position="275"/>
        <end position="295"/>
    </location>
</feature>
<evidence type="ECO:0000250" key="1"/>
<evidence type="ECO:0000255" key="2"/>
<evidence type="ECO:0000305" key="3"/>
<gene>
    <name type="primary">slc35e3</name>
</gene>
<keyword id="KW-0472">Membrane</keyword>
<keyword id="KW-1185">Reference proteome</keyword>
<keyword id="KW-0812">Transmembrane</keyword>
<keyword id="KW-1133">Transmembrane helix</keyword>
<reference key="1">
    <citation type="submission" date="2006-05" db="EMBL/GenBank/DDBJ databases">
        <authorList>
            <consortium name="NIH - Zebrafish Gene Collection (ZGC) project"/>
        </authorList>
    </citation>
    <scope>NUCLEOTIDE SEQUENCE [LARGE SCALE MRNA]</scope>
    <source>
        <tissue>Embryo</tissue>
    </source>
</reference>
<protein>
    <recommendedName>
        <fullName>Solute carrier family 35 member E3</fullName>
    </recommendedName>
</protein>
<accession>Q1JQ66</accession>
<proteinExistence type="evidence at transcript level"/>
<comment type="function">
    <text evidence="1">Putative transporter.</text>
</comment>
<comment type="subcellular location">
    <subcellularLocation>
        <location evidence="3">Membrane</location>
        <topology evidence="3">Multi-pass membrane protein</topology>
    </subcellularLocation>
</comment>
<comment type="similarity">
    <text evidence="3">Belongs to the TPT transporter family. SLC35E subfamily.</text>
</comment>
<organism>
    <name type="scientific">Danio rerio</name>
    <name type="common">Zebrafish</name>
    <name type="synonym">Brachydanio rerio</name>
    <dbReference type="NCBI Taxonomy" id="7955"/>
    <lineage>
        <taxon>Eukaryota</taxon>
        <taxon>Metazoa</taxon>
        <taxon>Chordata</taxon>
        <taxon>Craniata</taxon>
        <taxon>Vertebrata</taxon>
        <taxon>Euteleostomi</taxon>
        <taxon>Actinopterygii</taxon>
        <taxon>Neopterygii</taxon>
        <taxon>Teleostei</taxon>
        <taxon>Ostariophysi</taxon>
        <taxon>Cypriniformes</taxon>
        <taxon>Danionidae</taxon>
        <taxon>Danioninae</taxon>
        <taxon>Danio</taxon>
    </lineage>
</organism>
<dbReference type="EMBL" id="BC116467">
    <property type="protein sequence ID" value="AAI16468.1"/>
    <property type="molecule type" value="mRNA"/>
</dbReference>
<dbReference type="SMR" id="Q1JQ66"/>
<dbReference type="FunCoup" id="Q1JQ66">
    <property type="interactions" value="1607"/>
</dbReference>
<dbReference type="STRING" id="7955.ENSDARP00000066908"/>
<dbReference type="PaxDb" id="7955-ENSDARP00000066908"/>
<dbReference type="Ensembl" id="ENSDART00000181929">
    <property type="protein sequence ID" value="ENSDARP00000146733"/>
    <property type="gene ID" value="ENSDARG00000114987"/>
</dbReference>
<dbReference type="AGR" id="ZFIN:ZDB-GENE-041210-186"/>
<dbReference type="ZFIN" id="ZDB-GENE-041210-186">
    <property type="gene designation" value="slc35e3"/>
</dbReference>
<dbReference type="eggNOG" id="KOG1441">
    <property type="taxonomic scope" value="Eukaryota"/>
</dbReference>
<dbReference type="InParanoid" id="Q1JQ66"/>
<dbReference type="OMA" id="WMVVNTL"/>
<dbReference type="PRO" id="PR:Q1JQ66"/>
<dbReference type="Proteomes" id="UP000000437">
    <property type="component" value="Unplaced"/>
</dbReference>
<dbReference type="GO" id="GO:0005794">
    <property type="term" value="C:Golgi apparatus"/>
    <property type="evidence" value="ECO:0000318"/>
    <property type="project" value="GO_Central"/>
</dbReference>
<dbReference type="GO" id="GO:0016020">
    <property type="term" value="C:membrane"/>
    <property type="evidence" value="ECO:0007669"/>
    <property type="project" value="UniProtKB-SubCell"/>
</dbReference>
<dbReference type="GO" id="GO:0015297">
    <property type="term" value="F:antiporter activity"/>
    <property type="evidence" value="ECO:0000318"/>
    <property type="project" value="GO_Central"/>
</dbReference>
<dbReference type="GO" id="GO:0005338">
    <property type="term" value="F:nucleotide-sugar transmembrane transporter activity"/>
    <property type="evidence" value="ECO:0000318"/>
    <property type="project" value="GO_Central"/>
</dbReference>
<dbReference type="GO" id="GO:0055085">
    <property type="term" value="P:transmembrane transport"/>
    <property type="evidence" value="ECO:0000318"/>
    <property type="project" value="GO_Central"/>
</dbReference>
<dbReference type="InterPro" id="IPR004853">
    <property type="entry name" value="Sugar_P_trans_dom"/>
</dbReference>
<dbReference type="InterPro" id="IPR050186">
    <property type="entry name" value="TPT_transporter"/>
</dbReference>
<dbReference type="PANTHER" id="PTHR11132">
    <property type="entry name" value="SOLUTE CARRIER FAMILY 35"/>
    <property type="match status" value="1"/>
</dbReference>
<dbReference type="Pfam" id="PF03151">
    <property type="entry name" value="TPT"/>
    <property type="match status" value="1"/>
</dbReference>
<dbReference type="SUPFAM" id="SSF103481">
    <property type="entry name" value="Multidrug resistance efflux transporter EmrE"/>
    <property type="match status" value="1"/>
</dbReference>
<name>S35E3_DANRE</name>
<sequence length="313" mass="35151">MATRLSDLFGNSRIIAGLLVNLLSSICIVFINKWIYVHYGFPNMTLTLIHFVMTWLGLFICQKMDIFAPKSLRPSKILLLALSFCGFVVFTNLSLQSNTIGTYQLAKVMTTPVIIAIQTMYYRKTFSTKIKLTLVPITLGVILNSYYDVRFNLMGMIFATLGVLVTSLYQVWVGAKQHELQVNSMQLLYYQAPMSSAFLLVLVPFFEPLTGDGGIFGPWSFLALFMVLLSGVIAFLVNLSIYWIIGNTSPVTYNMFGHFKFCITLLGGYVLFQDPLSLNQGLGILCTLTGILAYTHFKLAEQEEGKSRLTQRP</sequence>